<reference key="1">
    <citation type="journal article" date="2008" name="J. Bacteriol.">
        <title>Genome sequence of Staphylococcus aureus strain Newman and comparative analysis of staphylococcal genomes: polymorphism and evolution of two major pathogenicity islands.</title>
        <authorList>
            <person name="Baba T."/>
            <person name="Bae T."/>
            <person name="Schneewind O."/>
            <person name="Takeuchi F."/>
            <person name="Hiramatsu K."/>
        </authorList>
    </citation>
    <scope>NUCLEOTIDE SEQUENCE [LARGE SCALE GENOMIC DNA]</scope>
    <source>
        <strain>Newman</strain>
    </source>
</reference>
<feature type="chain" id="PRO_1000072829" description="UPF0302 protein NWMN_1373">
    <location>
        <begin position="1"/>
        <end position="191"/>
    </location>
</feature>
<sequence>MSETFNQIKESFIEYLLFQYRFKSRIAVWVLNYIKVNEAKLANIHFVDTKINHHETLEIAEVGSHASAIQFTKRNIKLMNTNEIFDYIANHNCAFDIQIHFANVSKREQRLDDLIVAQLTESPSYQTYLHDLNSMAIDRHKHALLIDYLLHNIDLSLQMNEKQRFYQLTQILNTLKLVNKHNQFEDLADDN</sequence>
<organism>
    <name type="scientific">Staphylococcus aureus (strain Newman)</name>
    <dbReference type="NCBI Taxonomy" id="426430"/>
    <lineage>
        <taxon>Bacteria</taxon>
        <taxon>Bacillati</taxon>
        <taxon>Bacillota</taxon>
        <taxon>Bacilli</taxon>
        <taxon>Bacillales</taxon>
        <taxon>Staphylococcaceae</taxon>
        <taxon>Staphylococcus</taxon>
    </lineage>
</organism>
<name>Y1373_STAAE</name>
<proteinExistence type="inferred from homology"/>
<accession>A6QH13</accession>
<evidence type="ECO:0000255" key="1">
    <source>
        <dbReference type="HAMAP-Rule" id="MF_00760"/>
    </source>
</evidence>
<dbReference type="EMBL" id="AP009351">
    <property type="protein sequence ID" value="BAF67645.1"/>
    <property type="molecule type" value="Genomic_DNA"/>
</dbReference>
<dbReference type="RefSeq" id="WP_000004947.1">
    <property type="nucleotide sequence ID" value="NZ_JBBIAE010000001.1"/>
</dbReference>
<dbReference type="SMR" id="A6QH13"/>
<dbReference type="KEGG" id="sae:NWMN_1373"/>
<dbReference type="HOGENOM" id="CLU_122408_0_0_9"/>
<dbReference type="Proteomes" id="UP000006386">
    <property type="component" value="Chromosome"/>
</dbReference>
<dbReference type="Gene3D" id="3.40.1530.30">
    <property type="entry name" value="Uncharacterised family UPF0302, N-terminal domain"/>
    <property type="match status" value="1"/>
</dbReference>
<dbReference type="HAMAP" id="MF_00760">
    <property type="entry name" value="UPF0302"/>
    <property type="match status" value="1"/>
</dbReference>
<dbReference type="InterPro" id="IPR014957">
    <property type="entry name" value="IDEAL_dom"/>
</dbReference>
<dbReference type="InterPro" id="IPR011188">
    <property type="entry name" value="UPF0302"/>
</dbReference>
<dbReference type="InterPro" id="IPR014963">
    <property type="entry name" value="UPF0302_N"/>
</dbReference>
<dbReference type="InterPro" id="IPR038091">
    <property type="entry name" value="UPF0302_N_sf"/>
</dbReference>
<dbReference type="Pfam" id="PF08858">
    <property type="entry name" value="IDEAL"/>
    <property type="match status" value="1"/>
</dbReference>
<dbReference type="Pfam" id="PF08864">
    <property type="entry name" value="UPF0302"/>
    <property type="match status" value="1"/>
</dbReference>
<dbReference type="PIRSF" id="PIRSF007165">
    <property type="entry name" value="UCP007165"/>
    <property type="match status" value="1"/>
</dbReference>
<dbReference type="SMART" id="SM00914">
    <property type="entry name" value="IDEAL"/>
    <property type="match status" value="1"/>
</dbReference>
<protein>
    <recommendedName>
        <fullName evidence="1">UPF0302 protein NWMN_1373</fullName>
    </recommendedName>
</protein>
<comment type="similarity">
    <text evidence="1">Belongs to the UPF0302 family.</text>
</comment>
<gene>
    <name type="ordered locus">NWMN_1373</name>
</gene>